<reference key="1">
    <citation type="journal article" date="1991" name="Virology">
        <title>Identification and DNA sequence of the large subunit of the capping enzyme from Shope fibroma virus.</title>
        <authorList>
            <person name="Upton C."/>
            <person name="Stuart D."/>
            <person name="McFadden G."/>
        </authorList>
    </citation>
    <scope>NUCLEOTIDE SEQUENCE [GENOMIC DNA]</scope>
</reference>
<reference key="2">
    <citation type="journal article" date="1991" name="Virology">
        <title>Sequence and analysis of a portion of the genomes of Shope fibroma virus and malignant rabbit fibroma virus that is important for viral replication in lymphocytes.</title>
        <authorList>
            <person name="Strayer D.S."/>
            <person name="Jerng H.H."/>
            <person name="O'Connor K."/>
        </authorList>
    </citation>
    <scope>NUCLEOTIDE SEQUENCE [GENOMIC DNA]</scope>
</reference>
<reference key="3">
    <citation type="journal article" date="1999" name="Virology">
        <title>The complete genome sequence of shope (Rabbit) fibroma virus.</title>
        <authorList>
            <person name="Willer D.O."/>
            <person name="McFadden G."/>
            <person name="Evans D.H."/>
        </authorList>
    </citation>
    <scope>NUCLEOTIDE SEQUENCE [LARGE SCALE GENOMIC DNA]</scope>
</reference>
<reference key="4">
    <citation type="journal article" date="1990" name="Virology">
        <title>Identification and DNA sequence of the Shope fibroma virus DNA topoisomerase gene.</title>
        <authorList>
            <person name="Upton C."/>
            <person name="Opgenorth A."/>
            <person name="Traktman P."/>
            <person name="McFadden G."/>
        </authorList>
    </citation>
    <scope>NUCLEOTIDE SEQUENCE [GENOMIC DNA] OF 1-97</scope>
</reference>
<reference key="5">
    <citation type="journal article" date="1992" name="Virus Res.">
        <title>Sequence and analysis of the BamHI 'D' fragment of Shope fibroma virus: comparison with similar regions of related poxviruses.</title>
        <authorList>
            <person name="Strayer D.S."/>
            <person name="Jerng H.H."/>
        </authorList>
    </citation>
    <scope>NUCLEOTIDE SEQUENCE [GENOMIC DNA] OF 38-836</scope>
</reference>
<comment type="function">
    <text evidence="1">Catalytic subunit of the mRNA capping enzyme which catalyzes three enzymatic reactions: the 5' triphosphate end of the pre-mRNA is hydrolyzed to a diphosphate by RNA 5' triphosphatase; the diphosphate RNA end is capped with GMP by RNA guanylyltransferase and the GpppN cap is methylated by RNA (guanine-N7) methyltransferase. Heterodimeric mRNA capping enzyme catalyzes the linkage of a N7-methyl-guanosine moiety to the first transcribed nucleotide (cap 0 structure), whereas the polymerase associated VP39 is responsible for a second methylation at the 2'-O position of the ribose (cap 1 structure) (By similarity).</text>
</comment>
<comment type="function">
    <text evidence="1">The heterodimeric enzyme is also involved in early viral gene transcription termination and intermediate viral gene transcription initiation. Early gene transcription termination requires the termination factor VTF, the DNA-dependent ATPase NPH-I and the Rap94 subunit of the viral RNA polymerase, as well as the presence of a specific termination motif. Binds, together with RAP94, to the termination motif 5'-UUUUUNU-3' in the nascent early mRNA (By similarity).</text>
</comment>
<comment type="catalytic activity">
    <reaction evidence="2">
        <text>a 5'-end triphospho-ribonucleoside in mRNA + H2O = a 5'-end diphospho-ribonucleoside in mRNA + phosphate + H(+)</text>
        <dbReference type="Rhea" id="RHEA:67004"/>
        <dbReference type="Rhea" id="RHEA-COMP:17164"/>
        <dbReference type="Rhea" id="RHEA-COMP:17165"/>
        <dbReference type="ChEBI" id="CHEBI:15377"/>
        <dbReference type="ChEBI" id="CHEBI:15378"/>
        <dbReference type="ChEBI" id="CHEBI:43474"/>
        <dbReference type="ChEBI" id="CHEBI:167616"/>
        <dbReference type="ChEBI" id="CHEBI:167618"/>
        <dbReference type="EC" id="3.6.1.74"/>
    </reaction>
    <physiologicalReaction direction="left-to-right" evidence="2">
        <dbReference type="Rhea" id="RHEA:67005"/>
    </physiologicalReaction>
</comment>
<comment type="catalytic activity">
    <reaction>
        <text>a 5'-end diphospho-ribonucleoside in mRNA + GTP + H(+) = a 5'-end (5'-triphosphoguanosine)-ribonucleoside in mRNA + diphosphate</text>
        <dbReference type="Rhea" id="RHEA:67012"/>
        <dbReference type="Rhea" id="RHEA-COMP:17165"/>
        <dbReference type="Rhea" id="RHEA-COMP:17166"/>
        <dbReference type="ChEBI" id="CHEBI:15378"/>
        <dbReference type="ChEBI" id="CHEBI:33019"/>
        <dbReference type="ChEBI" id="CHEBI:37565"/>
        <dbReference type="ChEBI" id="CHEBI:167616"/>
        <dbReference type="ChEBI" id="CHEBI:167617"/>
        <dbReference type="EC" id="2.7.7.50"/>
    </reaction>
</comment>
<comment type="catalytic activity">
    <reaction evidence="3">
        <text>a 5'-end (5'-triphosphoguanosine)-ribonucleoside in mRNA + S-adenosyl-L-methionine = a 5'-end (N(7)-methyl 5'-triphosphoguanosine)-ribonucleoside in mRNA + S-adenosyl-L-homocysteine</text>
        <dbReference type="Rhea" id="RHEA:67008"/>
        <dbReference type="Rhea" id="RHEA-COMP:17166"/>
        <dbReference type="Rhea" id="RHEA-COMP:17167"/>
        <dbReference type="ChEBI" id="CHEBI:57856"/>
        <dbReference type="ChEBI" id="CHEBI:59789"/>
        <dbReference type="ChEBI" id="CHEBI:156461"/>
        <dbReference type="ChEBI" id="CHEBI:167617"/>
        <dbReference type="EC" id="2.1.1.56"/>
    </reaction>
</comment>
<comment type="cofactor">
    <cofactor evidence="2">
        <name>Mg(2+)</name>
        <dbReference type="ChEBI" id="CHEBI:18420"/>
    </cofactor>
</comment>
<comment type="subunit">
    <text evidence="1">Heterodimer of a catalytic and a regulatory subunit. Intrinsic methyltransferase activity of the catalytic subunit is weak and needs to be stimulated 30- to 50-fold by the regulatory subunit, which is itself catalytically inert (By similarity).</text>
</comment>
<comment type="subcellular location">
    <subcellularLocation>
        <location evidence="4">Virion</location>
    </subcellularLocation>
    <text>All the enzymes and other proteins required to synthesize early mRNAs are packaged within the virion core along with the DNA genome.</text>
</comment>
<comment type="domain">
    <text evidence="1">The N-terminus contains the triphosphatase and guanylyltransferase domains, whereas the C-terminus contains the methyltransferase domain. The N-terminus is involved in binding to the termination motif 5'-UUUUUNU-3' in the nascent mRNA (By similarity).</text>
</comment>
<comment type="similarity">
    <text evidence="4">In the N-terminal section; belongs to the dsDNA virus mRNA guanylyltransferase family.</text>
</comment>
<comment type="similarity">
    <text evidence="3">In the C-terminal section; belongs to the class I-like SAM-binding methyltransferase superfamily. mRNA cap 0 methyltransferase family.</text>
</comment>
<evidence type="ECO:0000250" key="1"/>
<evidence type="ECO:0000250" key="2">
    <source>
        <dbReference type="UniProtKB" id="P04298"/>
    </source>
</evidence>
<evidence type="ECO:0000255" key="3">
    <source>
        <dbReference type="PROSITE-ProRule" id="PRU00895"/>
    </source>
</evidence>
<evidence type="ECO:0000305" key="4"/>
<organismHost>
    <name type="scientific">Oryctolagus cuniculus</name>
    <name type="common">Rabbit</name>
    <dbReference type="NCBI Taxonomy" id="9986"/>
</organismHost>
<feature type="chain" id="PRO_0000210131" description="mRNA-capping enzyme catalytic subunit">
    <location>
        <begin position="1"/>
        <end position="836"/>
    </location>
</feature>
<feature type="domain" description="mRNA cap 0 methyltransferase" evidence="3">
    <location>
        <begin position="552"/>
        <end position="836"/>
    </location>
</feature>
<feature type="region of interest" description="Triphosphatase-guanylyltransferase" evidence="1">
    <location>
        <begin position="1"/>
        <end position="532"/>
    </location>
</feature>
<feature type="active site" description="N6-GMP-lysine intermediate" evidence="1">
    <location>
        <position position="256"/>
    </location>
</feature>
<feature type="binding site" evidence="2">
    <location>
        <position position="35"/>
    </location>
    <ligand>
        <name>Mg(2+)</name>
        <dbReference type="ChEBI" id="CHEBI:18420"/>
        <note>catalytic; for RNA triphosphatase activity</note>
    </ligand>
</feature>
<feature type="binding site" evidence="2">
    <location>
        <position position="37"/>
    </location>
    <ligand>
        <name>Mg(2+)</name>
        <dbReference type="ChEBI" id="CHEBI:18420"/>
        <note>catalytic; for RNA triphosphatase activity</note>
    </ligand>
</feature>
<feature type="binding site" evidence="2">
    <location>
        <position position="189"/>
    </location>
    <ligand>
        <name>Mg(2+)</name>
        <dbReference type="ChEBI" id="CHEBI:18420"/>
        <note>catalytic; for RNA triphosphatase activity</note>
    </ligand>
</feature>
<feature type="binding site" evidence="2">
    <location>
        <position position="191"/>
    </location>
    <ligand>
        <name>Mg(2+)</name>
        <dbReference type="ChEBI" id="CHEBI:18420"/>
        <note>catalytic; for RNA triphosphatase activity</note>
    </ligand>
</feature>
<feature type="binding site" evidence="3">
    <location>
        <begin position="541"/>
        <end position="542"/>
    </location>
    <ligand>
        <name>S-adenosyl-L-methionine</name>
        <dbReference type="ChEBI" id="CHEBI:59789"/>
    </ligand>
</feature>
<feature type="binding site" evidence="3">
    <location>
        <begin position="561"/>
        <end position="562"/>
    </location>
    <ligand>
        <name>mRNA</name>
        <dbReference type="ChEBI" id="CHEBI:33699"/>
    </ligand>
    <ligandPart>
        <name>mRNA cap</name>
    </ligandPart>
</feature>
<feature type="binding site" evidence="3">
    <location>
        <position position="565"/>
    </location>
    <ligand>
        <name>S-adenosyl-L-methionine</name>
        <dbReference type="ChEBI" id="CHEBI:59789"/>
    </ligand>
</feature>
<feature type="binding site" evidence="3">
    <location>
        <position position="590"/>
    </location>
    <ligand>
        <name>S-adenosyl-L-methionine</name>
        <dbReference type="ChEBI" id="CHEBI:59789"/>
    </ligand>
</feature>
<feature type="binding site" evidence="3">
    <location>
        <position position="612"/>
    </location>
    <ligand>
        <name>S-adenosyl-L-methionine</name>
        <dbReference type="ChEBI" id="CHEBI:59789"/>
    </ligand>
</feature>
<feature type="binding site" evidence="3">
    <location>
        <begin position="670"/>
        <end position="672"/>
    </location>
    <ligand>
        <name>S-adenosyl-L-methionine</name>
        <dbReference type="ChEBI" id="CHEBI:59789"/>
    </ligand>
</feature>
<feature type="site" description="Essential for RNA triphosphatase activity" evidence="1">
    <location>
        <position position="74"/>
    </location>
</feature>
<feature type="site" description="Essential for RNA triphosphatase activity" evidence="1">
    <location>
        <position position="104"/>
    </location>
</feature>
<feature type="site" description="Essential for RNA triphosphatase activity" evidence="1">
    <location>
        <position position="123"/>
    </location>
</feature>
<feature type="site" description="Essential for RNA triphosphatase activity" evidence="1">
    <location>
        <position position="156"/>
    </location>
</feature>
<feature type="site" description="Essential for RNA triphosphatase activity" evidence="1">
    <location>
        <position position="158"/>
    </location>
</feature>
<feature type="site" description="mRNA cap binding" evidence="3">
    <location>
        <position position="599"/>
    </location>
</feature>
<feature type="site" description="mRNA cap binding" evidence="3">
    <location>
        <position position="624"/>
    </location>
</feature>
<feature type="site" description="mRNA cap binding" evidence="3">
    <location>
        <position position="674"/>
    </location>
</feature>
<feature type="site" description="mRNA cap binding" evidence="3">
    <location>
        <position position="755"/>
    </location>
</feature>
<feature type="site" description="mRNA cap binding" evidence="3">
    <location>
        <position position="828"/>
    </location>
</feature>
<gene>
    <name type="ORF">D3R</name>
    <name type="ORF">s076R</name>
</gene>
<organism>
    <name type="scientific">Rabbit fibroma virus (strain Kasza)</name>
    <name type="common">RFV</name>
    <name type="synonym">Shope fibroma virus (strain Kasza)</name>
    <dbReference type="NCBI Taxonomy" id="10272"/>
    <lineage>
        <taxon>Viruses</taxon>
        <taxon>Varidnaviria</taxon>
        <taxon>Bamfordvirae</taxon>
        <taxon>Nucleocytoviricota</taxon>
        <taxon>Pokkesviricetes</taxon>
        <taxon>Chitovirales</taxon>
        <taxon>Poxviridae</taxon>
        <taxon>Chordopoxvirinae</taxon>
        <taxon>Leporipoxvirus</taxon>
        <taxon>Rabbit fibroma virus</taxon>
    </lineage>
</organism>
<name>MCEL_RFVKA</name>
<accession>P25950</accession>
<accession>Q77PC1</accession>
<dbReference type="EC" id="3.6.1.74"/>
<dbReference type="EC" id="2.7.7.50"/>
<dbReference type="EC" id="2.1.1.56"/>
<dbReference type="EMBL" id="M63902">
    <property type="protein sequence ID" value="AAA47224.1"/>
    <property type="molecule type" value="Genomic_DNA"/>
</dbReference>
<dbReference type="EMBL" id="AF170722">
    <property type="protein sequence ID" value="AAF17958.1"/>
    <property type="molecule type" value="Genomic_DNA"/>
</dbReference>
<dbReference type="PIR" id="A40478">
    <property type="entry name" value="QQVZRA"/>
</dbReference>
<dbReference type="RefSeq" id="NP_051965.1">
    <property type="nucleotide sequence ID" value="NC_001266.1"/>
</dbReference>
<dbReference type="SMR" id="P25950"/>
<dbReference type="GeneID" id="1486919"/>
<dbReference type="KEGG" id="vg:1486919"/>
<dbReference type="Proteomes" id="UP000000868">
    <property type="component" value="Segment"/>
</dbReference>
<dbReference type="GO" id="GO:0044423">
    <property type="term" value="C:virion component"/>
    <property type="evidence" value="ECO:0007669"/>
    <property type="project" value="UniProtKB-KW"/>
</dbReference>
<dbReference type="GO" id="GO:0050355">
    <property type="term" value="F:inorganic triphosphate phosphatase activity"/>
    <property type="evidence" value="ECO:0007669"/>
    <property type="project" value="InterPro"/>
</dbReference>
<dbReference type="GO" id="GO:0046872">
    <property type="term" value="F:metal ion binding"/>
    <property type="evidence" value="ECO:0007669"/>
    <property type="project" value="UniProtKB-KW"/>
</dbReference>
<dbReference type="GO" id="GO:0004482">
    <property type="term" value="F:mRNA 5'-cap (guanine-N7-)-methyltransferase activity"/>
    <property type="evidence" value="ECO:0007669"/>
    <property type="project" value="UniProtKB-EC"/>
</dbReference>
<dbReference type="GO" id="GO:0140818">
    <property type="term" value="F:mRNA 5'-triphosphate monophosphatase activity"/>
    <property type="evidence" value="ECO:0007669"/>
    <property type="project" value="RHEA"/>
</dbReference>
<dbReference type="GO" id="GO:0004484">
    <property type="term" value="F:mRNA guanylyltransferase activity"/>
    <property type="evidence" value="ECO:0007669"/>
    <property type="project" value="UniProtKB-EC"/>
</dbReference>
<dbReference type="GO" id="GO:0004651">
    <property type="term" value="F:polynucleotide 5'-phosphatase activity"/>
    <property type="evidence" value="ECO:0007669"/>
    <property type="project" value="UniProtKB-EC"/>
</dbReference>
<dbReference type="GO" id="GO:0003723">
    <property type="term" value="F:RNA binding"/>
    <property type="evidence" value="ECO:0007669"/>
    <property type="project" value="UniProtKB-KW"/>
</dbReference>
<dbReference type="Gene3D" id="2.40.50.830">
    <property type="match status" value="1"/>
</dbReference>
<dbReference type="Gene3D" id="3.20.100.20">
    <property type="match status" value="1"/>
</dbReference>
<dbReference type="Gene3D" id="3.30.470.140">
    <property type="match status" value="1"/>
</dbReference>
<dbReference type="Gene3D" id="3.40.50.150">
    <property type="entry name" value="Vaccinia Virus protein VP39"/>
    <property type="match status" value="1"/>
</dbReference>
<dbReference type="InterPro" id="IPR048425">
    <property type="entry name" value="MCEL_GT_NTPase"/>
</dbReference>
<dbReference type="InterPro" id="IPR048426">
    <property type="entry name" value="MCEL_GT_OB"/>
</dbReference>
<dbReference type="InterPro" id="IPR046429">
    <property type="entry name" value="MCEL_NTPase_sf"/>
</dbReference>
<dbReference type="InterPro" id="IPR046428">
    <property type="entry name" value="MCEL_OB_dom_sf"/>
</dbReference>
<dbReference type="InterPro" id="IPR019602">
    <property type="entry name" value="MCEL_TPase"/>
</dbReference>
<dbReference type="InterPro" id="IPR046430">
    <property type="entry name" value="MCEL_TPase_sf"/>
</dbReference>
<dbReference type="InterPro" id="IPR004971">
    <property type="entry name" value="mRNA_G-N7_MeTrfase_dom"/>
</dbReference>
<dbReference type="InterPro" id="IPR039753">
    <property type="entry name" value="RG7MT1"/>
</dbReference>
<dbReference type="InterPro" id="IPR029063">
    <property type="entry name" value="SAM-dependent_MTases_sf"/>
</dbReference>
<dbReference type="PANTHER" id="PTHR12189:SF2">
    <property type="entry name" value="MRNA CAP GUANINE-N7 METHYLTRANSFERASE"/>
    <property type="match status" value="1"/>
</dbReference>
<dbReference type="PANTHER" id="PTHR12189">
    <property type="entry name" value="MRNA GUANINE-7- METHYLTRANSFERASE"/>
    <property type="match status" value="1"/>
</dbReference>
<dbReference type="Pfam" id="PF21004">
    <property type="entry name" value="MCEL_GT_NTPase"/>
    <property type="match status" value="1"/>
</dbReference>
<dbReference type="Pfam" id="PF21005">
    <property type="entry name" value="MCEL_GT_OB"/>
    <property type="match status" value="1"/>
</dbReference>
<dbReference type="Pfam" id="PF10640">
    <property type="entry name" value="MCEL_TPase"/>
    <property type="match status" value="1"/>
</dbReference>
<dbReference type="Pfam" id="PF03291">
    <property type="entry name" value="mRNA_G-N7_MeTrfase"/>
    <property type="match status" value="1"/>
</dbReference>
<dbReference type="SUPFAM" id="SSF53335">
    <property type="entry name" value="S-adenosyl-L-methionine-dependent methyltransferases"/>
    <property type="match status" value="1"/>
</dbReference>
<dbReference type="PROSITE" id="PS51562">
    <property type="entry name" value="RNA_CAP0_MT"/>
    <property type="match status" value="1"/>
</dbReference>
<proteinExistence type="inferred from homology"/>
<protein>
    <recommendedName>
        <fullName>mRNA-capping enzyme catalytic subunit</fullName>
    </recommendedName>
    <alternativeName>
        <fullName>Virus termination factor large subunit</fullName>
        <shortName>VTF large subunit</shortName>
    </alternativeName>
    <alternativeName>
        <fullName>mRNA-capping enzyme 97 kDa subunit</fullName>
    </alternativeName>
    <alternativeName>
        <fullName>mRNA-capping enzyme large subunit</fullName>
    </alternativeName>
    <domain>
        <recommendedName>
            <fullName>Polynucleotide 5'-triphosphatase</fullName>
            <ecNumber>3.6.1.74</ecNumber>
        </recommendedName>
        <alternativeName>
            <fullName>mRNA 5'-triphosphatase</fullName>
            <shortName>TPase</shortName>
        </alternativeName>
    </domain>
    <domain>
        <recommendedName>
            <fullName>mRNA guanylyltransferase</fullName>
            <ecNumber>2.7.7.50</ecNumber>
        </recommendedName>
        <alternativeName>
            <fullName>GTP--RNA guanylyltransferase</fullName>
            <shortName>GTase</shortName>
        </alternativeName>
    </domain>
    <domain>
        <recommendedName>
            <fullName>mRNA (guanine-N(7))-methyltransferase</fullName>
            <ecNumber>2.1.1.56</ecNumber>
        </recommendedName>
        <alternativeName>
            <fullName>mRNA cap methyltransferase</fullName>
        </alternativeName>
    </domain>
</protein>
<keyword id="KW-0378">Hydrolase</keyword>
<keyword id="KW-0460">Magnesium</keyword>
<keyword id="KW-0479">Metal-binding</keyword>
<keyword id="KW-0489">Methyltransferase</keyword>
<keyword id="KW-0506">mRNA capping</keyword>
<keyword id="KW-0507">mRNA processing</keyword>
<keyword id="KW-0511">Multifunctional enzyme</keyword>
<keyword id="KW-0548">Nucleotidyltransferase</keyword>
<keyword id="KW-1185">Reference proteome</keyword>
<keyword id="KW-0694">RNA-binding</keyword>
<keyword id="KW-0949">S-adenosyl-L-methionine</keyword>
<keyword id="KW-0808">Transferase</keyword>
<keyword id="KW-0946">Virion</keyword>
<sequence>MDDSKKKRGTDYIEELILLYEDVPNPVQTDDMNHEVELTFIQPPVITLSTLLPFATSQESYILFTVTNKGVKIRNRINLSKIHGLDLKNIQLVDSIDNIIWEKKTLVKEHKIDSVALVKYSTEEKYIFLDYKKYLSAIKLELVNVVQVKVKHVTVDFKFKYFLGSGAQAKSSLLHVLNHPKSKPNPSLEFEIITTDEKIDSASLRKELIALFKLVFMASPSNIILDVVFKNPVQTILLKKNELPGIDLTNLYVTTKTDGVGVLITVTNKGIYCFFTHLQYTIRYDTTFESNESVTLYGEAVKQNNVWQIYLIKLITPKVSDRFKEKEYVEERLQNICDRMTFKVKKYEGPFESHSEIIDLLTTYLPSQPEGVVLFYSDQRNQPDYKIKLDNTTDHMINIIYRYMSSEPVIFGENSTFLEYKKFSDDKGFPKDYGTGKLMLTDNVRYLNNIYCIAFTNVYEDVGIKNVVVPIKFISEFSATGELIKPRIDKTFKYLYKEYYGNQYQIVVAHIRDQNIKIGDVLDEDKLSDVGQHYANDKYRLNPDVSYFTNKRTRGPLGILSNYVKTLLISLYCSKTFLDNSNKRKVLAIDFGNGADLEKYFYGEISSLVATDPDKEAIGRCIERYNSLNSGIKSKYYKFDYIQETIRSVTYVSSVREVFFFGKFDLVDWQFAIHYSFHPKHYATVMNNLTELTASGGKVLITTMDGDLLSQLTDKKTFVIHKNLPSSENYMSVEKIHEDQILVYNPSSMSRPMQEYIVKRVNLTKIFSEYGFELIDCVHFDTIIERSKRFINSVSKMEERKSTKNFFELNREALKHEGTDIDDLLRYYIVYVFSKR</sequence>